<gene>
    <name evidence="1" type="primary">mdtC</name>
    <name type="ordered locus">ECA3186</name>
</gene>
<feature type="chain" id="PRO_0000161834" description="Multidrug resistance protein MdtC">
    <location>
        <begin position="1"/>
        <end position="1026"/>
    </location>
</feature>
<feature type="transmembrane region" description="Helical" evidence="1">
    <location>
        <begin position="12"/>
        <end position="34"/>
    </location>
</feature>
<feature type="transmembrane region" description="Helical" evidence="1">
    <location>
        <begin position="336"/>
        <end position="353"/>
    </location>
</feature>
<feature type="transmembrane region" description="Helical" evidence="1">
    <location>
        <begin position="360"/>
        <end position="382"/>
    </location>
</feature>
<feature type="transmembrane region" description="Helical" evidence="1">
    <location>
        <begin position="431"/>
        <end position="450"/>
    </location>
</feature>
<feature type="transmembrane region" description="Helical" evidence="1">
    <location>
        <begin position="463"/>
        <end position="485"/>
    </location>
</feature>
<feature type="transmembrane region" description="Helical" evidence="1">
    <location>
        <begin position="525"/>
        <end position="547"/>
    </location>
</feature>
<feature type="transmembrane region" description="Helical" evidence="1">
    <location>
        <begin position="853"/>
        <end position="875"/>
    </location>
</feature>
<feature type="transmembrane region" description="Helical" evidence="1">
    <location>
        <begin position="895"/>
        <end position="917"/>
    </location>
</feature>
<feature type="transmembrane region" description="Helical" evidence="1">
    <location>
        <begin position="948"/>
        <end position="970"/>
    </location>
</feature>
<feature type="transmembrane region" description="Helical" evidence="1">
    <location>
        <begin position="985"/>
        <end position="1007"/>
    </location>
</feature>
<proteinExistence type="inferred from homology"/>
<name>MDTC_PECAS</name>
<protein>
    <recommendedName>
        <fullName evidence="1">Multidrug resistance protein MdtC</fullName>
    </recommendedName>
    <alternativeName>
        <fullName evidence="1">Multidrug transporter MdtC</fullName>
    </alternativeName>
</protein>
<accession>Q6D2B0</accession>
<dbReference type="EMBL" id="BX950851">
    <property type="protein sequence ID" value="CAG76084.1"/>
    <property type="molecule type" value="Genomic_DNA"/>
</dbReference>
<dbReference type="RefSeq" id="WP_011094708.1">
    <property type="nucleotide sequence ID" value="NC_004547.2"/>
</dbReference>
<dbReference type="SMR" id="Q6D2B0"/>
<dbReference type="STRING" id="218491.ECA3186"/>
<dbReference type="GeneID" id="57209871"/>
<dbReference type="KEGG" id="eca:ECA3186"/>
<dbReference type="PATRIC" id="fig|218491.5.peg.3227"/>
<dbReference type="eggNOG" id="COG0841">
    <property type="taxonomic scope" value="Bacteria"/>
</dbReference>
<dbReference type="HOGENOM" id="CLU_002755_1_2_6"/>
<dbReference type="OrthoDB" id="9757904at2"/>
<dbReference type="Proteomes" id="UP000007966">
    <property type="component" value="Chromosome"/>
</dbReference>
<dbReference type="GO" id="GO:0005886">
    <property type="term" value="C:plasma membrane"/>
    <property type="evidence" value="ECO:0007669"/>
    <property type="project" value="UniProtKB-SubCell"/>
</dbReference>
<dbReference type="GO" id="GO:0042910">
    <property type="term" value="F:xenobiotic transmembrane transporter activity"/>
    <property type="evidence" value="ECO:0007669"/>
    <property type="project" value="TreeGrafter"/>
</dbReference>
<dbReference type="FunFam" id="1.20.1640.10:FF:000001">
    <property type="entry name" value="Efflux pump membrane transporter"/>
    <property type="match status" value="1"/>
</dbReference>
<dbReference type="FunFam" id="3.30.70.1430:FF:000001">
    <property type="entry name" value="Efflux pump membrane transporter"/>
    <property type="match status" value="1"/>
</dbReference>
<dbReference type="Gene3D" id="3.30.70.1430">
    <property type="entry name" value="Multidrug efflux transporter AcrB pore domain"/>
    <property type="match status" value="2"/>
</dbReference>
<dbReference type="Gene3D" id="3.30.70.1440">
    <property type="entry name" value="Multidrug efflux transporter AcrB pore domain"/>
    <property type="match status" value="1"/>
</dbReference>
<dbReference type="Gene3D" id="3.30.70.1320">
    <property type="entry name" value="Multidrug efflux transporter AcrB pore domain like"/>
    <property type="match status" value="1"/>
</dbReference>
<dbReference type="Gene3D" id="3.30.2090.10">
    <property type="entry name" value="Multidrug efflux transporter AcrB TolC docking domain, DN and DC subdomains"/>
    <property type="match status" value="2"/>
</dbReference>
<dbReference type="Gene3D" id="1.20.1640.10">
    <property type="entry name" value="Multidrug efflux transporter AcrB transmembrane domain"/>
    <property type="match status" value="2"/>
</dbReference>
<dbReference type="HAMAP" id="MF_01424">
    <property type="entry name" value="MdtC"/>
    <property type="match status" value="1"/>
</dbReference>
<dbReference type="InterPro" id="IPR027463">
    <property type="entry name" value="AcrB_DN_DC_subdom"/>
</dbReference>
<dbReference type="InterPro" id="IPR001036">
    <property type="entry name" value="Acrflvin-R"/>
</dbReference>
<dbReference type="InterPro" id="IPR023931">
    <property type="entry name" value="Multidrug-R_MdtC"/>
</dbReference>
<dbReference type="NCBIfam" id="NF007905">
    <property type="entry name" value="PRK10614.1"/>
    <property type="match status" value="1"/>
</dbReference>
<dbReference type="NCBIfam" id="NF033617">
    <property type="entry name" value="RND_permease_2"/>
    <property type="match status" value="1"/>
</dbReference>
<dbReference type="PANTHER" id="PTHR32063">
    <property type="match status" value="1"/>
</dbReference>
<dbReference type="PANTHER" id="PTHR32063:SF34">
    <property type="entry name" value="MULTIDRUG RESISTANCE PROTEIN MDTC"/>
    <property type="match status" value="1"/>
</dbReference>
<dbReference type="Pfam" id="PF00873">
    <property type="entry name" value="ACR_tran"/>
    <property type="match status" value="1"/>
</dbReference>
<dbReference type="PRINTS" id="PR00702">
    <property type="entry name" value="ACRIFLAVINRP"/>
</dbReference>
<dbReference type="SUPFAM" id="SSF82693">
    <property type="entry name" value="Multidrug efflux transporter AcrB pore domain, PN1, PN2, PC1 and PC2 subdomains"/>
    <property type="match status" value="4"/>
</dbReference>
<dbReference type="SUPFAM" id="SSF82714">
    <property type="entry name" value="Multidrug efflux transporter AcrB TolC docking domain, DN and DC subdomains"/>
    <property type="match status" value="2"/>
</dbReference>
<dbReference type="SUPFAM" id="SSF82866">
    <property type="entry name" value="Multidrug efflux transporter AcrB transmembrane domain"/>
    <property type="match status" value="2"/>
</dbReference>
<comment type="subunit">
    <text evidence="1">Part of a tripartite efflux system composed of MdtA, MdtB and MdtC. MdtC forms a heteromultimer with MdtB.</text>
</comment>
<comment type="subcellular location">
    <subcellularLocation>
        <location evidence="1">Cell inner membrane</location>
        <topology evidence="1">Multi-pass membrane protein</topology>
    </subcellularLocation>
</comment>
<comment type="similarity">
    <text evidence="1">Belongs to the resistance-nodulation-cell division (RND) (TC 2.A.6) family. MdtC subfamily.</text>
</comment>
<organism>
    <name type="scientific">Pectobacterium atrosepticum (strain SCRI 1043 / ATCC BAA-672)</name>
    <name type="common">Erwinia carotovora subsp. atroseptica</name>
    <dbReference type="NCBI Taxonomy" id="218491"/>
    <lineage>
        <taxon>Bacteria</taxon>
        <taxon>Pseudomonadati</taxon>
        <taxon>Pseudomonadota</taxon>
        <taxon>Gammaproteobacteria</taxon>
        <taxon>Enterobacterales</taxon>
        <taxon>Pectobacteriaceae</taxon>
        <taxon>Pectobacterium</taxon>
    </lineage>
</organism>
<keyword id="KW-0997">Cell inner membrane</keyword>
<keyword id="KW-1003">Cell membrane</keyword>
<keyword id="KW-0472">Membrane</keyword>
<keyword id="KW-1185">Reference proteome</keyword>
<keyword id="KW-0812">Transmembrane</keyword>
<keyword id="KW-1133">Transmembrane helix</keyword>
<keyword id="KW-0813">Transport</keyword>
<sequence>MKFFALFIHRPVATLLLTLAIALCGVLGFRLLPVSPLPQVDFPVISVSASLAGASPETMASAVATPLERALGRIAGVSEMTSTSSLGSTRVILVFNLDRDINGAARDVQAAINAAQNLLPSGMSSRPTYRKVNPSDAPVMILTLTSDTYSQGQLYDFASTQLSQKISQMEGVGDVSIGGSSLPAVRVALNPVALFNQGISLDEVRQAIAQANVRQPLGNVENSQKRWQIQTNDELKTADAYAPLIIHYSNGAAVRLSDVATVEDSVQNSRNAGMANSKPAILVMIRRAPDANIITTVDNIRAAMPELRASLPAEIQLDVAQDRSPTIRASLAEVEQSLIIAVALVILVVFLFLRSWRATAIPALAVPVSLIGTFAAMYLCGFSLNNLSLMALTIATGFVVDDAIVVLENISRHIEAGMKPLQASLQGVREVGFTVLSMSLSLVAVFLPLLLMDGLPGRLFREFAVTLSVAIMISLLISLTLTPMLCARLLRAVPKRSQPRTQGFNRVLLAMQQGYGRSLKWVLNHARWVLLLLLGTIALNVWLYISIPKTFFPEQDTGRMMGFIQADQSISFQAMTVKLQNFMTIVSSDPAVDNVNGFTGGSRTNSGSMFISLKPLSERDVSAQQVISRLRIKLAKEPGANLFLMPVQDIRIGGREANAGYQYTLLSDDLNELRTWEPKIRAAFSKLPELADVNSDQQDKGAEMALTYDRDAMAQLGISVSAANALLNNAFGQRQISTIYQPLNQYKVVMEVDDAYTQDVSSLDKMFVINSDNKPIPLSYFASWKPINAPLSVNHQGLSAASTISFNLPEGTDLSSATAAIERTMTSLGVPSSVRGQFSGTAQAFQQSQSSQLLLILAAIITVYIVLGILYESYVHPLTILSTLPSAGVGALLALEWFGAPFSLVALIGIMLLIGIVKKNAIMMVDFALVAQRSGKLSAQDAIFQACLLRFRPIMMTTLAALFGALPLVLTSGDGAELRQPLGITIVGGLLMSQVLTLYTTPVVYLFFDKLRTIRRKAPEKDLSLS</sequence>
<evidence type="ECO:0000255" key="1">
    <source>
        <dbReference type="HAMAP-Rule" id="MF_01424"/>
    </source>
</evidence>
<reference key="1">
    <citation type="journal article" date="2004" name="Proc. Natl. Acad. Sci. U.S.A.">
        <title>Genome sequence of the enterobacterial phytopathogen Erwinia carotovora subsp. atroseptica and characterization of virulence factors.</title>
        <authorList>
            <person name="Bell K.S."/>
            <person name="Sebaihia M."/>
            <person name="Pritchard L."/>
            <person name="Holden M.T.G."/>
            <person name="Hyman L.J."/>
            <person name="Holeva M.C."/>
            <person name="Thomson N.R."/>
            <person name="Bentley S.D."/>
            <person name="Churcher L.J.C."/>
            <person name="Mungall K."/>
            <person name="Atkin R."/>
            <person name="Bason N."/>
            <person name="Brooks K."/>
            <person name="Chillingworth T."/>
            <person name="Clark K."/>
            <person name="Doggett J."/>
            <person name="Fraser A."/>
            <person name="Hance Z."/>
            <person name="Hauser H."/>
            <person name="Jagels K."/>
            <person name="Moule S."/>
            <person name="Norbertczak H."/>
            <person name="Ormond D."/>
            <person name="Price C."/>
            <person name="Quail M.A."/>
            <person name="Sanders M."/>
            <person name="Walker D."/>
            <person name="Whitehead S."/>
            <person name="Salmond G.P.C."/>
            <person name="Birch P.R.J."/>
            <person name="Parkhill J."/>
            <person name="Toth I.K."/>
        </authorList>
    </citation>
    <scope>NUCLEOTIDE SEQUENCE [LARGE SCALE GENOMIC DNA]</scope>
    <source>
        <strain>SCRI 1043 / ATCC BAA-672</strain>
    </source>
</reference>